<organism>
    <name type="scientific">Pongo abelii</name>
    <name type="common">Sumatran orangutan</name>
    <name type="synonym">Pongo pygmaeus abelii</name>
    <dbReference type="NCBI Taxonomy" id="9601"/>
    <lineage>
        <taxon>Eukaryota</taxon>
        <taxon>Metazoa</taxon>
        <taxon>Chordata</taxon>
        <taxon>Craniata</taxon>
        <taxon>Vertebrata</taxon>
        <taxon>Euteleostomi</taxon>
        <taxon>Mammalia</taxon>
        <taxon>Eutheria</taxon>
        <taxon>Euarchontoglires</taxon>
        <taxon>Primates</taxon>
        <taxon>Haplorrhini</taxon>
        <taxon>Catarrhini</taxon>
        <taxon>Hominidae</taxon>
        <taxon>Pongo</taxon>
    </lineage>
</organism>
<accession>Q5R4W6</accession>
<sequence>MSDPEMGWVPEPPTMTLGASRVELRVSCHGLLDRDTLTKPHPCVLLKLYSDEQWVEVERTEVLRSCSSPVFSRVLALEYFFEEKQPLQFHVFDAEDGATSPRNDTFLGSTECTLGQIVSQTKVTKPLLLKNGKTAGKSTITIVAEEVSGTNDYVQLTFRAYKLDNKDPFSKSDPFMEIYKTNEDQSDQLVWRTEVVKNNLNPSWEPFRLSLHSLCSCDVHRPLKFLVYDYDSSGKHDFIGEFTSTFQEMQEGTANPGQEMQWDCINPKYRDKKKNYKSSGTVVLAQCTVEKVHTFLDYIMGGCQISFTVAIDFTASNGDPRSSQSLHCLSPRQPNHYLQALRAVGGICQDYDSDKRFPAFGFGARIPPNFEVSHDFAINFDPENPECEEISGVIASYRRCLPQIQLYGPTNVAPIINRVAEPAQREQSTGQATKYSVLLVLTDGVVSDMAETRTAIVRASRLPMSIIIVGVGNADFSDMRLLDGDDGPLRCPRGVPAARDIVQFVPFRDFKDAAPSALAKRVLAEVPRQVVEYYASQGISPGAPRPCTLATTPSPSP</sequence>
<feature type="chain" id="PRO_0000144847" description="Copine-6">
    <location>
        <begin position="1"/>
        <end position="557"/>
    </location>
</feature>
<feature type="domain" description="C2 1" evidence="4">
    <location>
        <begin position="2"/>
        <end position="127"/>
    </location>
</feature>
<feature type="domain" description="C2 2" evidence="4">
    <location>
        <begin position="134"/>
        <end position="263"/>
    </location>
</feature>
<feature type="domain" description="VWFA" evidence="5">
    <location>
        <begin position="306"/>
        <end position="526"/>
    </location>
</feature>
<feature type="region of interest" description="Linker region" evidence="3">
    <location>
        <begin position="244"/>
        <end position="303"/>
    </location>
</feature>
<feature type="binding site" evidence="4">
    <location>
        <position position="167"/>
    </location>
    <ligand>
        <name>Ca(2+)</name>
        <dbReference type="ChEBI" id="CHEBI:29108"/>
        <label>1</label>
    </ligand>
</feature>
<feature type="binding site" evidence="4">
    <location>
        <position position="167"/>
    </location>
    <ligand>
        <name>Ca(2+)</name>
        <dbReference type="ChEBI" id="CHEBI:29108"/>
        <label>2</label>
    </ligand>
</feature>
<feature type="binding site" evidence="4">
    <location>
        <position position="173"/>
    </location>
    <ligand>
        <name>Ca(2+)</name>
        <dbReference type="ChEBI" id="CHEBI:29108"/>
        <label>1</label>
    </ligand>
</feature>
<feature type="binding site" evidence="4">
    <location>
        <position position="229"/>
    </location>
    <ligand>
        <name>Ca(2+)</name>
        <dbReference type="ChEBI" id="CHEBI:29108"/>
        <label>1</label>
    </ligand>
</feature>
<feature type="binding site" evidence="4">
    <location>
        <position position="229"/>
    </location>
    <ligand>
        <name>Ca(2+)</name>
        <dbReference type="ChEBI" id="CHEBI:29108"/>
        <label>2</label>
    </ligand>
</feature>
<feature type="binding site" evidence="4">
    <location>
        <position position="231"/>
    </location>
    <ligand>
        <name>Ca(2+)</name>
        <dbReference type="ChEBI" id="CHEBI:29108"/>
        <label>1</label>
    </ligand>
</feature>
<feature type="binding site" evidence="4">
    <location>
        <position position="231"/>
    </location>
    <ligand>
        <name>Ca(2+)</name>
        <dbReference type="ChEBI" id="CHEBI:29108"/>
        <label>2</label>
    </ligand>
</feature>
<feature type="binding site" evidence="4">
    <location>
        <position position="237"/>
    </location>
    <ligand>
        <name>Ca(2+)</name>
        <dbReference type="ChEBI" id="CHEBI:29108"/>
        <label>2</label>
    </ligand>
</feature>
<protein>
    <recommendedName>
        <fullName evidence="6">Copine-6</fullName>
    </recommendedName>
    <alternativeName>
        <fullName evidence="2">Copine VI</fullName>
    </alternativeName>
</protein>
<proteinExistence type="evidence at transcript level"/>
<evidence type="ECO:0000250" key="1">
    <source>
        <dbReference type="UniProtKB" id="O95741"/>
    </source>
</evidence>
<evidence type="ECO:0000250" key="2">
    <source>
        <dbReference type="UniProtKB" id="Q99829"/>
    </source>
</evidence>
<evidence type="ECO:0000250" key="3">
    <source>
        <dbReference type="UniProtKB" id="Q9Z140"/>
    </source>
</evidence>
<evidence type="ECO:0000255" key="4">
    <source>
        <dbReference type="PROSITE-ProRule" id="PRU00041"/>
    </source>
</evidence>
<evidence type="ECO:0000255" key="5">
    <source>
        <dbReference type="PROSITE-ProRule" id="PRU00219"/>
    </source>
</evidence>
<evidence type="ECO:0000305" key="6"/>
<comment type="function">
    <text evidence="1 3">Calcium-dependent phospholipid-binding protein that plays a role in calcium-mediated intracellular processes. Binds phospholipid membranes in a calcium-dependent manner (By similarity). Plays a role in dendrite formation by melanocytes (By similarity).</text>
</comment>
<comment type="cofactor">
    <cofactor evidence="4">
        <name>Ca(2+)</name>
        <dbReference type="ChEBI" id="CHEBI:29108"/>
    </cofactor>
</comment>
<comment type="subunit">
    <text evidence="1 3">Interacts (via second C2 domain) with OS9 (via C-terminus); this interaction occurs in a calcium-dependent manner in vitro. May interact with NECAB1.</text>
</comment>
<comment type="subcellular location">
    <subcellularLocation>
        <location evidence="3">Cytoplasm</location>
    </subcellularLocation>
    <subcellularLocation>
        <location evidence="3">Cell membrane</location>
    </subcellularLocation>
    <subcellularLocation>
        <location evidence="3">Endosome</location>
    </subcellularLocation>
    <subcellularLocation>
        <location evidence="3">Cytoplasmic vesicle</location>
        <location evidence="3">Clathrin-coated vesicle</location>
    </subcellularLocation>
    <subcellularLocation>
        <location evidence="3">Perikaryon</location>
    </subcellularLocation>
    <subcellularLocation>
        <location evidence="3">Cell projection</location>
        <location evidence="3">Dendrite</location>
    </subcellularLocation>
    <text evidence="3">Mainly cytoplasmic in absence of calcium. Associated predominantly with membranes in presence of calcium. Translocates to the cell membrane in a calcium-dependent manner. Colocalized with transferrin in intracellular clathrin-coated membrane vesicles in a calcium-dependent manner.</text>
</comment>
<comment type="domain">
    <text evidence="3">The C2 domain 1 binds phospholipids in a calcium-independent manner and is not necessary for calcium-mediated translocation and association to the plasma membrane. The C2 domain 2 binds phospholipids in a calcium-dependent manner and is necessary for calcium-mediated translocation and association to the plasma membrane. The linker region contributes to the calcium-dependent translocation and association to the plasma membrane. The VWFA domain is necessary for association with intracellular clathrin-coated vesicles in a calcium-dependent manner.</text>
</comment>
<comment type="similarity">
    <text evidence="6">Belongs to the copine family.</text>
</comment>
<name>CPNE6_PONAB</name>
<gene>
    <name evidence="1" type="primary">CPNE6</name>
</gene>
<dbReference type="EMBL" id="CR861125">
    <property type="protein sequence ID" value="CAH93200.1"/>
    <property type="molecule type" value="mRNA"/>
</dbReference>
<dbReference type="RefSeq" id="NP_001127642.1">
    <property type="nucleotide sequence ID" value="NM_001134170.1"/>
</dbReference>
<dbReference type="SMR" id="Q5R4W6"/>
<dbReference type="STRING" id="9601.ENSPPYP00000006455"/>
<dbReference type="GeneID" id="100174722"/>
<dbReference type="KEGG" id="pon:100174722"/>
<dbReference type="CTD" id="9362"/>
<dbReference type="eggNOG" id="KOG1327">
    <property type="taxonomic scope" value="Eukaryota"/>
</dbReference>
<dbReference type="InParanoid" id="Q5R4W6"/>
<dbReference type="OrthoDB" id="5855668at2759"/>
<dbReference type="Proteomes" id="UP000001595">
    <property type="component" value="Unplaced"/>
</dbReference>
<dbReference type="GO" id="GO:0030424">
    <property type="term" value="C:axon"/>
    <property type="evidence" value="ECO:0000250"/>
    <property type="project" value="UniProtKB"/>
</dbReference>
<dbReference type="GO" id="GO:0030136">
    <property type="term" value="C:clathrin-coated vesicle"/>
    <property type="evidence" value="ECO:0007669"/>
    <property type="project" value="UniProtKB-SubCell"/>
</dbReference>
<dbReference type="GO" id="GO:0030425">
    <property type="term" value="C:dendrite"/>
    <property type="evidence" value="ECO:0000250"/>
    <property type="project" value="UniProtKB"/>
</dbReference>
<dbReference type="GO" id="GO:0005768">
    <property type="term" value="C:endosome"/>
    <property type="evidence" value="ECO:0007669"/>
    <property type="project" value="UniProtKB-SubCell"/>
</dbReference>
<dbReference type="GO" id="GO:0016020">
    <property type="term" value="C:membrane"/>
    <property type="evidence" value="ECO:0000250"/>
    <property type="project" value="UniProtKB"/>
</dbReference>
<dbReference type="GO" id="GO:0043204">
    <property type="term" value="C:perikaryon"/>
    <property type="evidence" value="ECO:0007669"/>
    <property type="project" value="UniProtKB-SubCell"/>
</dbReference>
<dbReference type="GO" id="GO:0005886">
    <property type="term" value="C:plasma membrane"/>
    <property type="evidence" value="ECO:0007669"/>
    <property type="project" value="UniProtKB-SubCell"/>
</dbReference>
<dbReference type="GO" id="GO:0005544">
    <property type="term" value="F:calcium-dependent phospholipid binding"/>
    <property type="evidence" value="ECO:0007669"/>
    <property type="project" value="InterPro"/>
</dbReference>
<dbReference type="GO" id="GO:0046872">
    <property type="term" value="F:metal ion binding"/>
    <property type="evidence" value="ECO:0007669"/>
    <property type="project" value="UniProtKB-KW"/>
</dbReference>
<dbReference type="GO" id="GO:0001786">
    <property type="term" value="F:phosphatidylserine binding"/>
    <property type="evidence" value="ECO:0000250"/>
    <property type="project" value="UniProtKB"/>
</dbReference>
<dbReference type="GO" id="GO:0030154">
    <property type="term" value="P:cell differentiation"/>
    <property type="evidence" value="ECO:0007669"/>
    <property type="project" value="UniProtKB-KW"/>
</dbReference>
<dbReference type="GO" id="GO:0071277">
    <property type="term" value="P:cellular response to calcium ion"/>
    <property type="evidence" value="ECO:0007669"/>
    <property type="project" value="TreeGrafter"/>
</dbReference>
<dbReference type="CDD" id="cd04048">
    <property type="entry name" value="C2A_Copine"/>
    <property type="match status" value="1"/>
</dbReference>
<dbReference type="CDD" id="cd04047">
    <property type="entry name" value="C2B_Copine"/>
    <property type="match status" value="1"/>
</dbReference>
<dbReference type="CDD" id="cd01459">
    <property type="entry name" value="vWA_copine_like"/>
    <property type="match status" value="1"/>
</dbReference>
<dbReference type="FunFam" id="2.60.40.150:FF:000063">
    <property type="entry name" value="Copine 4"/>
    <property type="match status" value="1"/>
</dbReference>
<dbReference type="FunFam" id="2.60.40.150:FF:000126">
    <property type="entry name" value="Copine 6"/>
    <property type="match status" value="1"/>
</dbReference>
<dbReference type="Gene3D" id="2.60.40.150">
    <property type="entry name" value="C2 domain"/>
    <property type="match status" value="2"/>
</dbReference>
<dbReference type="InterPro" id="IPR000008">
    <property type="entry name" value="C2_dom"/>
</dbReference>
<dbReference type="InterPro" id="IPR035892">
    <property type="entry name" value="C2_domain_sf"/>
</dbReference>
<dbReference type="InterPro" id="IPR037768">
    <property type="entry name" value="C2B_Copine"/>
</dbReference>
<dbReference type="InterPro" id="IPR045052">
    <property type="entry name" value="Copine"/>
</dbReference>
<dbReference type="InterPro" id="IPR010734">
    <property type="entry name" value="Copine_C"/>
</dbReference>
<dbReference type="InterPro" id="IPR002035">
    <property type="entry name" value="VWF_A"/>
</dbReference>
<dbReference type="InterPro" id="IPR036465">
    <property type="entry name" value="vWFA_dom_sf"/>
</dbReference>
<dbReference type="PANTHER" id="PTHR10857">
    <property type="entry name" value="COPINE"/>
    <property type="match status" value="1"/>
</dbReference>
<dbReference type="PANTHER" id="PTHR10857:SF5">
    <property type="entry name" value="COPINE-6"/>
    <property type="match status" value="1"/>
</dbReference>
<dbReference type="Pfam" id="PF00168">
    <property type="entry name" value="C2"/>
    <property type="match status" value="2"/>
</dbReference>
<dbReference type="Pfam" id="PF07002">
    <property type="entry name" value="Copine"/>
    <property type="match status" value="1"/>
</dbReference>
<dbReference type="SMART" id="SM00239">
    <property type="entry name" value="C2"/>
    <property type="match status" value="2"/>
</dbReference>
<dbReference type="SMART" id="SM00327">
    <property type="entry name" value="VWA"/>
    <property type="match status" value="1"/>
</dbReference>
<dbReference type="SUPFAM" id="SSF49562">
    <property type="entry name" value="C2 domain (Calcium/lipid-binding domain, CaLB)"/>
    <property type="match status" value="2"/>
</dbReference>
<dbReference type="SUPFAM" id="SSF53300">
    <property type="entry name" value="vWA-like"/>
    <property type="match status" value="1"/>
</dbReference>
<dbReference type="PROSITE" id="PS50004">
    <property type="entry name" value="C2"/>
    <property type="match status" value="2"/>
</dbReference>
<dbReference type="PROSITE" id="PS50234">
    <property type="entry name" value="VWFA"/>
    <property type="match status" value="1"/>
</dbReference>
<keyword id="KW-0106">Calcium</keyword>
<keyword id="KW-1003">Cell membrane</keyword>
<keyword id="KW-0966">Cell projection</keyword>
<keyword id="KW-0963">Cytoplasm</keyword>
<keyword id="KW-0968">Cytoplasmic vesicle</keyword>
<keyword id="KW-0221">Differentiation</keyword>
<keyword id="KW-0967">Endosome</keyword>
<keyword id="KW-0472">Membrane</keyword>
<keyword id="KW-0479">Metal-binding</keyword>
<keyword id="KW-1185">Reference proteome</keyword>
<keyword id="KW-0677">Repeat</keyword>
<reference key="1">
    <citation type="submission" date="2004-11" db="EMBL/GenBank/DDBJ databases">
        <authorList>
            <consortium name="The German cDNA consortium"/>
        </authorList>
    </citation>
    <scope>NUCLEOTIDE SEQUENCE [LARGE SCALE MRNA]</scope>
    <source>
        <tissue>Brain cortex</tissue>
    </source>
</reference>